<gene>
    <name type="primary">dppF</name>
    <name type="synonym">dppE</name>
    <name type="ordered locus">b3540</name>
    <name type="ordered locus">JW3509</name>
</gene>
<accession>P37313</accession>
<accession>Q2M7K2</accession>
<reference key="1">
    <citation type="journal article" date="1994" name="Mol. Microbiol.">
        <title>The dipeptide permease of Escherichia coli closely resembles other bacterial transport systems and shows growth-phase-dependent expression.</title>
        <authorList>
            <person name="Abouhamad W.N."/>
            <person name="Manson M.D."/>
        </authorList>
    </citation>
    <scope>NUCLEOTIDE SEQUENCE [GENOMIC DNA]</scope>
    <scope>FUNCTION</scope>
    <scope>CATALYTIC ACTIVITY</scope>
    <scope>SUBUNIT</scope>
    <source>
        <strain>K12 / MM500</strain>
    </source>
</reference>
<reference key="2">
    <citation type="journal article" date="1994" name="Nucleic Acids Res.">
        <title>Analysis of the Escherichia coli genome. V. DNA sequence of the region from 76.0 to 81.5 minutes.</title>
        <authorList>
            <person name="Sofia H.J."/>
            <person name="Burland V."/>
            <person name="Daniels D.L."/>
            <person name="Plunkett G. III"/>
            <person name="Blattner F.R."/>
        </authorList>
    </citation>
    <scope>NUCLEOTIDE SEQUENCE [LARGE SCALE GENOMIC DNA]</scope>
    <source>
        <strain>K12 / MG1655 / ATCC 47076</strain>
    </source>
</reference>
<reference key="3">
    <citation type="journal article" date="1997" name="Science">
        <title>The complete genome sequence of Escherichia coli K-12.</title>
        <authorList>
            <person name="Blattner F.R."/>
            <person name="Plunkett G. III"/>
            <person name="Bloch C.A."/>
            <person name="Perna N.T."/>
            <person name="Burland V."/>
            <person name="Riley M."/>
            <person name="Collado-Vides J."/>
            <person name="Glasner J.D."/>
            <person name="Rode C.K."/>
            <person name="Mayhew G.F."/>
            <person name="Gregor J."/>
            <person name="Davis N.W."/>
            <person name="Kirkpatrick H.A."/>
            <person name="Goeden M.A."/>
            <person name="Rose D.J."/>
            <person name="Mau B."/>
            <person name="Shao Y."/>
        </authorList>
    </citation>
    <scope>NUCLEOTIDE SEQUENCE [LARGE SCALE GENOMIC DNA]</scope>
    <source>
        <strain>K12 / MG1655 / ATCC 47076</strain>
    </source>
</reference>
<reference key="4">
    <citation type="journal article" date="2006" name="Mol. Syst. Biol.">
        <title>Highly accurate genome sequences of Escherichia coli K-12 strains MG1655 and W3110.</title>
        <authorList>
            <person name="Hayashi K."/>
            <person name="Morooka N."/>
            <person name="Yamamoto Y."/>
            <person name="Fujita K."/>
            <person name="Isono K."/>
            <person name="Choi S."/>
            <person name="Ohtsubo E."/>
            <person name="Baba T."/>
            <person name="Wanner B.L."/>
            <person name="Mori H."/>
            <person name="Horiuchi T."/>
        </authorList>
    </citation>
    <scope>NUCLEOTIDE SEQUENCE [LARGE SCALE GENOMIC DNA]</scope>
    <source>
        <strain>K12 / W3110 / ATCC 27325 / DSM 5911</strain>
    </source>
</reference>
<reference key="5">
    <citation type="journal article" date="1993" name="J. Bacteriol.">
        <title>The periplasmic dipeptide permease system transports 5-aminolevulinic acid in Escherichia coli.</title>
        <authorList>
            <person name="Verkamp E."/>
            <person name="Backman V.M."/>
            <person name="Bjoernsson J.M."/>
            <person name="Soell D."/>
            <person name="Eggertsson G."/>
        </authorList>
    </citation>
    <scope>FUNCTION IN 5-AMINOLEVULINIC ACID TRANSPORT</scope>
</reference>
<reference key="6">
    <citation type="journal article" date="2006" name="Proc. Natl. Acad. Sci. U.S.A.">
        <title>The housekeeping dipeptide permease is the Escherichia coli heme transporter and functions with two optional peptide binding proteins.</title>
        <authorList>
            <person name="Letoffe S."/>
            <person name="Delepelaire P."/>
            <person name="Wandersman C."/>
        </authorList>
    </citation>
    <scope>FUNCTION IN HEME TRANSPORT</scope>
    <scope>SUBUNIT</scope>
    <scope>DISRUPTION PHENOTYPE</scope>
</reference>
<keyword id="KW-0002">3D-structure</keyword>
<keyword id="KW-0067">ATP-binding</keyword>
<keyword id="KW-0997">Cell inner membrane</keyword>
<keyword id="KW-1003">Cell membrane</keyword>
<keyword id="KW-0472">Membrane</keyword>
<keyword id="KW-0547">Nucleotide-binding</keyword>
<keyword id="KW-0571">Peptide transport</keyword>
<keyword id="KW-0653">Protein transport</keyword>
<keyword id="KW-1185">Reference proteome</keyword>
<keyword id="KW-1278">Translocase</keyword>
<keyword id="KW-0813">Transport</keyword>
<comment type="function">
    <text evidence="3 5">Part of the ABC transporter DppABCDF involved in dipeptide transport (PubMed:7536291). Responsible for energy coupling to the transport system (Probable).</text>
</comment>
<comment type="function">
    <text evidence="2 4">When a foreign outer membrane heme receptor is expressed in E.coli, DppABCDF can also transport heme and its precursor, 5-aminolevulinic acid (ALA), from the periplasm into the cytoplasm.</text>
</comment>
<comment type="catalytic activity">
    <reaction evidence="6">
        <text>a dipeptide(out) + ATP + H2O = a dipeptide(in) + ADP + phosphate + H(+)</text>
        <dbReference type="Rhea" id="RHEA:23120"/>
        <dbReference type="ChEBI" id="CHEBI:15377"/>
        <dbReference type="ChEBI" id="CHEBI:15378"/>
        <dbReference type="ChEBI" id="CHEBI:30616"/>
        <dbReference type="ChEBI" id="CHEBI:43474"/>
        <dbReference type="ChEBI" id="CHEBI:90799"/>
        <dbReference type="ChEBI" id="CHEBI:456216"/>
        <dbReference type="EC" id="7.4.2.9"/>
    </reaction>
</comment>
<comment type="subunit">
    <text evidence="2 3">The complex is composed of two ATP-binding proteins (DppD and DppF), two transmembrane proteins (DppB and DppC) and a solute-binding protein (DppA) (PubMed:16905647, PubMed:7536291). MppA can replace DppA as binding protein for heme and ALA transport (PubMed:16905647).</text>
</comment>
<comment type="subcellular location">
    <subcellularLocation>
        <location evidence="5">Cell inner membrane</location>
        <topology evidence="5">Peripheral membrane protein</topology>
    </subcellularLocation>
</comment>
<comment type="disruption phenotype">
    <text evidence="2">Inactivation of the gene abolishes use of heme as an iron source.</text>
</comment>
<comment type="similarity">
    <text evidence="5">Belongs to the ABC transporter superfamily.</text>
</comment>
<protein>
    <recommendedName>
        <fullName evidence="5">Dipeptide transport ATP-binding protein DppF</fullName>
        <ecNumber evidence="6">7.4.2.9</ecNumber>
    </recommendedName>
</protein>
<feature type="chain" id="PRO_0000092317" description="Dipeptide transport ATP-binding protein DppF">
    <location>
        <begin position="1"/>
        <end position="334"/>
    </location>
</feature>
<feature type="domain" description="ABC transporter" evidence="1">
    <location>
        <begin position="13"/>
        <end position="262"/>
    </location>
</feature>
<feature type="binding site" evidence="1">
    <location>
        <begin position="55"/>
        <end position="62"/>
    </location>
    <ligand>
        <name>ATP</name>
        <dbReference type="ChEBI" id="CHEBI:30616"/>
    </ligand>
</feature>
<feature type="sequence conflict" description="In Ref. 1; AAA23706." evidence="5" ref="1">
    <original>LVACFAVDQDENPQR</original>
    <variation>RNDDKSADRQSQHA</variation>
    <location>
        <begin position="320"/>
        <end position="334"/>
    </location>
</feature>
<name>DPPF_ECOLI</name>
<evidence type="ECO:0000255" key="1">
    <source>
        <dbReference type="PROSITE-ProRule" id="PRU00434"/>
    </source>
</evidence>
<evidence type="ECO:0000269" key="2">
    <source>
    </source>
</evidence>
<evidence type="ECO:0000269" key="3">
    <source>
    </source>
</evidence>
<evidence type="ECO:0000269" key="4">
    <source>
    </source>
</evidence>
<evidence type="ECO:0000305" key="5"/>
<evidence type="ECO:0000305" key="6">
    <source>
    </source>
</evidence>
<dbReference type="EC" id="7.4.2.9" evidence="6"/>
<dbReference type="EMBL" id="L08399">
    <property type="protein sequence ID" value="AAA23706.1"/>
    <property type="molecule type" value="Genomic_DNA"/>
</dbReference>
<dbReference type="EMBL" id="U00039">
    <property type="protein sequence ID" value="AAB18518.1"/>
    <property type="molecule type" value="Genomic_DNA"/>
</dbReference>
<dbReference type="EMBL" id="U00096">
    <property type="protein sequence ID" value="AAC76565.1"/>
    <property type="molecule type" value="Genomic_DNA"/>
</dbReference>
<dbReference type="EMBL" id="AP009048">
    <property type="protein sequence ID" value="BAE77754.1"/>
    <property type="molecule type" value="Genomic_DNA"/>
</dbReference>
<dbReference type="PIR" id="S47762">
    <property type="entry name" value="S47762"/>
</dbReference>
<dbReference type="RefSeq" id="NP_417997.1">
    <property type="nucleotide sequence ID" value="NC_000913.3"/>
</dbReference>
<dbReference type="RefSeq" id="WP_000107012.1">
    <property type="nucleotide sequence ID" value="NZ_SSZK01000039.1"/>
</dbReference>
<dbReference type="PDB" id="8Z1V">
    <property type="method" value="EM"/>
    <property type="resolution" value="3.16 A"/>
    <property type="chains" value="D=1-334"/>
</dbReference>
<dbReference type="PDB" id="8Z1W">
    <property type="method" value="EM"/>
    <property type="resolution" value="3.00 A"/>
    <property type="chains" value="D=1-334"/>
</dbReference>
<dbReference type="PDB" id="8Z1X">
    <property type="method" value="EM"/>
    <property type="resolution" value="3.20 A"/>
    <property type="chains" value="D=1-334"/>
</dbReference>
<dbReference type="PDB" id="8Z1Y">
    <property type="method" value="EM"/>
    <property type="resolution" value="2.73 A"/>
    <property type="chains" value="D=1-334"/>
</dbReference>
<dbReference type="PDBsum" id="8Z1V"/>
<dbReference type="PDBsum" id="8Z1W"/>
<dbReference type="PDBsum" id="8Z1X"/>
<dbReference type="PDBsum" id="8Z1Y"/>
<dbReference type="EMDB" id="EMD-39737"/>
<dbReference type="EMDB" id="EMD-39738"/>
<dbReference type="EMDB" id="EMD-39739"/>
<dbReference type="EMDB" id="EMD-39740"/>
<dbReference type="SMR" id="P37313"/>
<dbReference type="BioGRID" id="4259468">
    <property type="interactions" value="350"/>
</dbReference>
<dbReference type="BioGRID" id="852364">
    <property type="interactions" value="3"/>
</dbReference>
<dbReference type="ComplexPortal" id="CPX-4345">
    <property type="entry name" value="Heme/dipeptide ABC transporter complex, dppA variant"/>
</dbReference>
<dbReference type="ComplexPortal" id="CPX-4346">
    <property type="entry name" value="Heme/dipeptide ABC transporter complex, mppA variant"/>
</dbReference>
<dbReference type="FunCoup" id="P37313">
    <property type="interactions" value="249"/>
</dbReference>
<dbReference type="IntAct" id="P37313">
    <property type="interactions" value="17"/>
</dbReference>
<dbReference type="STRING" id="511145.b3540"/>
<dbReference type="jPOST" id="P37313"/>
<dbReference type="PaxDb" id="511145-b3540"/>
<dbReference type="EnsemblBacteria" id="AAC76565">
    <property type="protein sequence ID" value="AAC76565"/>
    <property type="gene ID" value="b3540"/>
</dbReference>
<dbReference type="GeneID" id="948056"/>
<dbReference type="KEGG" id="ecj:JW3509"/>
<dbReference type="KEGG" id="eco:b3540"/>
<dbReference type="KEGG" id="ecoc:C3026_19185"/>
<dbReference type="PATRIC" id="fig|1411691.4.peg.3175"/>
<dbReference type="EchoBASE" id="EB2512"/>
<dbReference type="eggNOG" id="COG4608">
    <property type="taxonomic scope" value="Bacteria"/>
</dbReference>
<dbReference type="HOGENOM" id="CLU_000604_1_23_6"/>
<dbReference type="InParanoid" id="P37313"/>
<dbReference type="OMA" id="GRYPHMF"/>
<dbReference type="OrthoDB" id="9784450at2"/>
<dbReference type="PhylomeDB" id="P37313"/>
<dbReference type="BioCyc" id="EcoCyc:DPPF-MONOMER"/>
<dbReference type="BioCyc" id="MetaCyc:DPPF-MONOMER"/>
<dbReference type="PRO" id="PR:P37313"/>
<dbReference type="Proteomes" id="UP000000625">
    <property type="component" value="Chromosome"/>
</dbReference>
<dbReference type="GO" id="GO:0055052">
    <property type="term" value="C:ATP-binding cassette (ABC) transporter complex, substrate-binding subunit-containing"/>
    <property type="evidence" value="ECO:0000303"/>
    <property type="project" value="ComplexPortal"/>
</dbReference>
<dbReference type="GO" id="GO:0016020">
    <property type="term" value="C:membrane"/>
    <property type="evidence" value="ECO:0000303"/>
    <property type="project" value="ComplexPortal"/>
</dbReference>
<dbReference type="GO" id="GO:0005524">
    <property type="term" value="F:ATP binding"/>
    <property type="evidence" value="ECO:0000255"/>
    <property type="project" value="EcoCyc"/>
</dbReference>
<dbReference type="GO" id="GO:0016887">
    <property type="term" value="F:ATP hydrolysis activity"/>
    <property type="evidence" value="ECO:0007669"/>
    <property type="project" value="InterPro"/>
</dbReference>
<dbReference type="GO" id="GO:0071916">
    <property type="term" value="F:dipeptide transmembrane transporter activity"/>
    <property type="evidence" value="ECO:0007669"/>
    <property type="project" value="InterPro"/>
</dbReference>
<dbReference type="GO" id="GO:0015232">
    <property type="term" value="F:heme transmembrane transporter activity"/>
    <property type="evidence" value="ECO:0000315"/>
    <property type="project" value="EcoliWiki"/>
</dbReference>
<dbReference type="GO" id="GO:0042938">
    <property type="term" value="P:dipeptide transport"/>
    <property type="evidence" value="ECO:0000303"/>
    <property type="project" value="ComplexPortal"/>
</dbReference>
<dbReference type="GO" id="GO:0035351">
    <property type="term" value="P:heme transmembrane transport"/>
    <property type="evidence" value="ECO:0000303"/>
    <property type="project" value="ComplexPortal"/>
</dbReference>
<dbReference type="GO" id="GO:0015031">
    <property type="term" value="P:protein transport"/>
    <property type="evidence" value="ECO:0007669"/>
    <property type="project" value="UniProtKB-KW"/>
</dbReference>
<dbReference type="GO" id="GO:0009314">
    <property type="term" value="P:response to radiation"/>
    <property type="evidence" value="ECO:0000315"/>
    <property type="project" value="EcoCyc"/>
</dbReference>
<dbReference type="CDD" id="cd03257">
    <property type="entry name" value="ABC_NikE_OppD_transporters"/>
    <property type="match status" value="1"/>
</dbReference>
<dbReference type="FunFam" id="3.40.50.300:FF:000016">
    <property type="entry name" value="Oligopeptide ABC transporter ATP-binding component"/>
    <property type="match status" value="1"/>
</dbReference>
<dbReference type="Gene3D" id="3.40.50.300">
    <property type="entry name" value="P-loop containing nucleotide triphosphate hydrolases"/>
    <property type="match status" value="1"/>
</dbReference>
<dbReference type="InterPro" id="IPR003593">
    <property type="entry name" value="AAA+_ATPase"/>
</dbReference>
<dbReference type="InterPro" id="IPR050319">
    <property type="entry name" value="ABC_transp_ATP-bind"/>
</dbReference>
<dbReference type="InterPro" id="IPR003439">
    <property type="entry name" value="ABC_transporter-like_ATP-bd"/>
</dbReference>
<dbReference type="InterPro" id="IPR017871">
    <property type="entry name" value="ABC_transporter-like_CS"/>
</dbReference>
<dbReference type="InterPro" id="IPR050021">
    <property type="entry name" value="DppF"/>
</dbReference>
<dbReference type="InterPro" id="IPR013563">
    <property type="entry name" value="Oligopep_ABC_C"/>
</dbReference>
<dbReference type="InterPro" id="IPR027417">
    <property type="entry name" value="P-loop_NTPase"/>
</dbReference>
<dbReference type="NCBIfam" id="NF043071">
    <property type="entry name" value="DppF_dipep"/>
    <property type="match status" value="1"/>
</dbReference>
<dbReference type="NCBIfam" id="TIGR01727">
    <property type="entry name" value="oligo_HPY"/>
    <property type="match status" value="1"/>
</dbReference>
<dbReference type="NCBIfam" id="NF008453">
    <property type="entry name" value="PRK11308.1"/>
    <property type="match status" value="1"/>
</dbReference>
<dbReference type="PANTHER" id="PTHR43776:SF6">
    <property type="entry name" value="DIPEPTIDE TRANSPORT ATP-BINDING PROTEIN DPPF"/>
    <property type="match status" value="1"/>
</dbReference>
<dbReference type="PANTHER" id="PTHR43776">
    <property type="entry name" value="TRANSPORT ATP-BINDING PROTEIN"/>
    <property type="match status" value="1"/>
</dbReference>
<dbReference type="Pfam" id="PF00005">
    <property type="entry name" value="ABC_tran"/>
    <property type="match status" value="1"/>
</dbReference>
<dbReference type="Pfam" id="PF08352">
    <property type="entry name" value="oligo_HPY"/>
    <property type="match status" value="1"/>
</dbReference>
<dbReference type="SMART" id="SM00382">
    <property type="entry name" value="AAA"/>
    <property type="match status" value="1"/>
</dbReference>
<dbReference type="SUPFAM" id="SSF52540">
    <property type="entry name" value="P-loop containing nucleoside triphosphate hydrolases"/>
    <property type="match status" value="1"/>
</dbReference>
<dbReference type="PROSITE" id="PS00211">
    <property type="entry name" value="ABC_TRANSPORTER_1"/>
    <property type="match status" value="1"/>
</dbReference>
<dbReference type="PROSITE" id="PS50893">
    <property type="entry name" value="ABC_TRANSPORTER_2"/>
    <property type="match status" value="1"/>
</dbReference>
<sequence length="334" mass="37560">MSTQEATLQQPLLQAIDLKKHYPVKKGMFAPERLVKALDGVSFNLERGKTLAVVGESGCGKSTLGRLLTMIEMPTGGELYYQGQDLLKHDPQAQKLRRQKIQIVFQNPYGSLNPRKKVGQILEEPLLINTSLSKEQRREKALSMMAKVGLKTEHYDRYPHMFSGGQRQRIAIARGLMLDPDVVIADEPVSALDVSVRAQVLNLMMDLQQELGLSYVFISHDLSVVEHIADEVMVMYLGRCVEKGTKDQIFNNPRHPYTQALLSATPRLNPDDRRERIKLSGELPSPLNPPPGCAFNARCRRRFGPCTQLQPQLKDYGGQLVACFAVDQDENPQR</sequence>
<organism>
    <name type="scientific">Escherichia coli (strain K12)</name>
    <dbReference type="NCBI Taxonomy" id="83333"/>
    <lineage>
        <taxon>Bacteria</taxon>
        <taxon>Pseudomonadati</taxon>
        <taxon>Pseudomonadota</taxon>
        <taxon>Gammaproteobacteria</taxon>
        <taxon>Enterobacterales</taxon>
        <taxon>Enterobacteriaceae</taxon>
        <taxon>Escherichia</taxon>
    </lineage>
</organism>
<proteinExistence type="evidence at protein level"/>